<dbReference type="EMBL" id="AQIA01051412">
    <property type="status" value="NOT_ANNOTATED_CDS"/>
    <property type="molecule type" value="Genomic_DNA"/>
</dbReference>
<dbReference type="EMBL" id="AQIA01051413">
    <property type="status" value="NOT_ANNOTATED_CDS"/>
    <property type="molecule type" value="Genomic_DNA"/>
</dbReference>
<dbReference type="EMBL" id="AQIA01051414">
    <property type="status" value="NOT_ANNOTATED_CDS"/>
    <property type="molecule type" value="Genomic_DNA"/>
</dbReference>
<dbReference type="EMBL" id="AQIA01051415">
    <property type="status" value="NOT_ANNOTATED_CDS"/>
    <property type="molecule type" value="Genomic_DNA"/>
</dbReference>
<dbReference type="EMBL" id="AQIA01051416">
    <property type="status" value="NOT_ANNOTATED_CDS"/>
    <property type="molecule type" value="Genomic_DNA"/>
</dbReference>
<dbReference type="EMBL" id="AQIA01051417">
    <property type="status" value="NOT_ANNOTATED_CDS"/>
    <property type="molecule type" value="Genomic_DNA"/>
</dbReference>
<dbReference type="EMBL" id="AQIA01051418">
    <property type="status" value="NOT_ANNOTATED_CDS"/>
    <property type="molecule type" value="Genomic_DNA"/>
</dbReference>
<dbReference type="EMBL" id="AQIA01051419">
    <property type="status" value="NOT_ANNOTATED_CDS"/>
    <property type="molecule type" value="Genomic_DNA"/>
</dbReference>
<dbReference type="EMBL" id="AQIA01051420">
    <property type="status" value="NOT_ANNOTATED_CDS"/>
    <property type="molecule type" value="Genomic_DNA"/>
</dbReference>
<dbReference type="EMBL" id="AQIA01051421">
    <property type="status" value="NOT_ANNOTATED_CDS"/>
    <property type="molecule type" value="Genomic_DNA"/>
</dbReference>
<dbReference type="STRING" id="9541.ENSMFAP00000018080"/>
<dbReference type="GlyCosmos" id="A0A2K5V015">
    <property type="glycosylation" value="50 sites, No reported glycans"/>
</dbReference>
<dbReference type="VEuPathDB" id="HostDB:ENSMFAG00000032080"/>
<dbReference type="OMA" id="FYCEIAL"/>
<dbReference type="Proteomes" id="UP000233100">
    <property type="component" value="Chromosome 4"/>
</dbReference>
<dbReference type="GO" id="GO:0009986">
    <property type="term" value="C:cell surface"/>
    <property type="evidence" value="ECO:0007669"/>
    <property type="project" value="TreeGrafter"/>
</dbReference>
<dbReference type="GO" id="GO:0005813">
    <property type="term" value="C:centrosome"/>
    <property type="evidence" value="ECO:0007669"/>
    <property type="project" value="UniProtKB-SubCell"/>
</dbReference>
<dbReference type="GO" id="GO:0005737">
    <property type="term" value="C:cytoplasm"/>
    <property type="evidence" value="ECO:0007669"/>
    <property type="project" value="UniProtKB-KW"/>
</dbReference>
<dbReference type="GO" id="GO:0005576">
    <property type="term" value="C:extracellular region"/>
    <property type="evidence" value="ECO:0007669"/>
    <property type="project" value="UniProtKB-KW"/>
</dbReference>
<dbReference type="GO" id="GO:0033165">
    <property type="term" value="C:interphotoreceptor matrix"/>
    <property type="evidence" value="ECO:0007669"/>
    <property type="project" value="UniProtKB-SubCell"/>
</dbReference>
<dbReference type="GO" id="GO:0001750">
    <property type="term" value="C:photoreceptor outer segment"/>
    <property type="evidence" value="ECO:0007669"/>
    <property type="project" value="UniProtKB-SubCell"/>
</dbReference>
<dbReference type="GO" id="GO:0005886">
    <property type="term" value="C:plasma membrane"/>
    <property type="evidence" value="ECO:0007669"/>
    <property type="project" value="TreeGrafter"/>
</dbReference>
<dbReference type="GO" id="GO:0043235">
    <property type="term" value="C:receptor complex"/>
    <property type="evidence" value="ECO:0007669"/>
    <property type="project" value="TreeGrafter"/>
</dbReference>
<dbReference type="GO" id="GO:0005509">
    <property type="term" value="F:calcium ion binding"/>
    <property type="evidence" value="ECO:0007669"/>
    <property type="project" value="InterPro"/>
</dbReference>
<dbReference type="GO" id="GO:0007411">
    <property type="term" value="P:axon guidance"/>
    <property type="evidence" value="ECO:0007669"/>
    <property type="project" value="TreeGrafter"/>
</dbReference>
<dbReference type="GO" id="GO:0007219">
    <property type="term" value="P:Notch signaling pathway"/>
    <property type="evidence" value="ECO:0007669"/>
    <property type="project" value="TreeGrafter"/>
</dbReference>
<dbReference type="GO" id="GO:0007601">
    <property type="term" value="P:visual perception"/>
    <property type="evidence" value="ECO:0007669"/>
    <property type="project" value="UniProtKB-KW"/>
</dbReference>
<dbReference type="CDD" id="cd00054">
    <property type="entry name" value="EGF_CA"/>
    <property type="match status" value="13"/>
</dbReference>
<dbReference type="CDD" id="cd00110">
    <property type="entry name" value="LamG"/>
    <property type="match status" value="5"/>
</dbReference>
<dbReference type="FunFam" id="2.10.25.10:FF:000318">
    <property type="entry name" value="Eyes shut homolog"/>
    <property type="match status" value="1"/>
</dbReference>
<dbReference type="FunFam" id="2.10.25.10:FF:000425">
    <property type="entry name" value="Eyes shut homolog"/>
    <property type="match status" value="1"/>
</dbReference>
<dbReference type="FunFam" id="2.10.25.10:FF:000508">
    <property type="entry name" value="Eyes shut homolog"/>
    <property type="match status" value="1"/>
</dbReference>
<dbReference type="FunFam" id="2.10.25.10:FF:000669">
    <property type="entry name" value="Eyes shut homolog"/>
    <property type="match status" value="1"/>
</dbReference>
<dbReference type="FunFam" id="2.10.25.10:FF:000779">
    <property type="entry name" value="Eyes shut homolog"/>
    <property type="match status" value="1"/>
</dbReference>
<dbReference type="FunFam" id="2.60.120.200:FF:000231">
    <property type="entry name" value="Eyes shut homolog"/>
    <property type="match status" value="1"/>
</dbReference>
<dbReference type="FunFam" id="2.10.25.10:FF:000066">
    <property type="entry name" value="FAT atypical cadherin 4"/>
    <property type="match status" value="1"/>
</dbReference>
<dbReference type="FunFam" id="2.10.25.10:FF:000004">
    <property type="entry name" value="Neurogenic locus notch 1"/>
    <property type="match status" value="1"/>
</dbReference>
<dbReference type="FunFam" id="2.10.25.10:FF:000100">
    <property type="entry name" value="neurogenic locus notch homolog protein 3"/>
    <property type="match status" value="1"/>
</dbReference>
<dbReference type="FunFam" id="2.10.25.10:FF:000327">
    <property type="entry name" value="neurogenic locus notch homolog protein 4"/>
    <property type="match status" value="1"/>
</dbReference>
<dbReference type="FunFam" id="2.10.25.10:FF:000122">
    <property type="entry name" value="Protein crumbs homolog 2"/>
    <property type="match status" value="1"/>
</dbReference>
<dbReference type="FunFam" id="2.10.25.10:FF:000591">
    <property type="entry name" value="Protein eyes shut homolog"/>
    <property type="match status" value="1"/>
</dbReference>
<dbReference type="FunFam" id="2.10.25.10:FF:000676">
    <property type="entry name" value="Protein eyes shut homolog"/>
    <property type="match status" value="1"/>
</dbReference>
<dbReference type="FunFam" id="2.10.25.10:FF:000722">
    <property type="entry name" value="Protein eyes shut homolog"/>
    <property type="match status" value="1"/>
</dbReference>
<dbReference type="FunFam" id="2.10.25.10:FF:000747">
    <property type="entry name" value="Protein eyes shut homolog"/>
    <property type="match status" value="1"/>
</dbReference>
<dbReference type="FunFam" id="2.60.120.200:FF:000183">
    <property type="entry name" value="Protein eyes shut homolog"/>
    <property type="match status" value="1"/>
</dbReference>
<dbReference type="FunFam" id="2.60.120.200:FF:000190">
    <property type="entry name" value="Protein eyes shut homolog"/>
    <property type="match status" value="1"/>
</dbReference>
<dbReference type="FunFam" id="2.60.120.200:FF:000210">
    <property type="entry name" value="Protein eyes shut homolog"/>
    <property type="match status" value="1"/>
</dbReference>
<dbReference type="FunFam" id="2.60.120.200:FF:000218">
    <property type="entry name" value="Protein eyes shut homolog"/>
    <property type="match status" value="1"/>
</dbReference>
<dbReference type="FunFam" id="2.10.25.10:FF:000053">
    <property type="entry name" value="Slit guidance ligand 2"/>
    <property type="match status" value="1"/>
</dbReference>
<dbReference type="Gene3D" id="2.60.120.200">
    <property type="match status" value="5"/>
</dbReference>
<dbReference type="Gene3D" id="2.10.25.10">
    <property type="entry name" value="Laminin"/>
    <property type="match status" value="24"/>
</dbReference>
<dbReference type="InterPro" id="IPR013320">
    <property type="entry name" value="ConA-like_dom_sf"/>
</dbReference>
<dbReference type="InterPro" id="IPR001881">
    <property type="entry name" value="EGF-like_Ca-bd_dom"/>
</dbReference>
<dbReference type="InterPro" id="IPR013032">
    <property type="entry name" value="EGF-like_CS"/>
</dbReference>
<dbReference type="InterPro" id="IPR000742">
    <property type="entry name" value="EGF-like_dom"/>
</dbReference>
<dbReference type="InterPro" id="IPR000152">
    <property type="entry name" value="EGF-type_Asp/Asn_hydroxyl_site"/>
</dbReference>
<dbReference type="InterPro" id="IPR018097">
    <property type="entry name" value="EGF_Ca-bd_CS"/>
</dbReference>
<dbReference type="InterPro" id="IPR009030">
    <property type="entry name" value="Growth_fac_rcpt_cys_sf"/>
</dbReference>
<dbReference type="InterPro" id="IPR001791">
    <property type="entry name" value="Laminin_G"/>
</dbReference>
<dbReference type="InterPro" id="IPR051355">
    <property type="entry name" value="Notch/Slit_guidance"/>
</dbReference>
<dbReference type="PANTHER" id="PTHR45836:SF23">
    <property type="entry name" value="NEUROGENIC LOCUS NOTCH HOMOLOG PROTEIN 1"/>
    <property type="match status" value="1"/>
</dbReference>
<dbReference type="PANTHER" id="PTHR45836">
    <property type="entry name" value="SLIT HOMOLOG"/>
    <property type="match status" value="1"/>
</dbReference>
<dbReference type="Pfam" id="PF00008">
    <property type="entry name" value="EGF"/>
    <property type="match status" value="9"/>
</dbReference>
<dbReference type="Pfam" id="PF12661">
    <property type="entry name" value="hEGF"/>
    <property type="match status" value="3"/>
</dbReference>
<dbReference type="Pfam" id="PF02210">
    <property type="entry name" value="Laminin_G_2"/>
    <property type="match status" value="5"/>
</dbReference>
<dbReference type="SMART" id="SM00181">
    <property type="entry name" value="EGF"/>
    <property type="match status" value="27"/>
</dbReference>
<dbReference type="SMART" id="SM00179">
    <property type="entry name" value="EGF_CA"/>
    <property type="match status" value="20"/>
</dbReference>
<dbReference type="SMART" id="SM00282">
    <property type="entry name" value="LamG"/>
    <property type="match status" value="5"/>
</dbReference>
<dbReference type="SUPFAM" id="SSF49899">
    <property type="entry name" value="Concanavalin A-like lectins/glucanases"/>
    <property type="match status" value="5"/>
</dbReference>
<dbReference type="SUPFAM" id="SSF57196">
    <property type="entry name" value="EGF/Laminin"/>
    <property type="match status" value="12"/>
</dbReference>
<dbReference type="SUPFAM" id="SSF57184">
    <property type="entry name" value="Growth factor receptor domain"/>
    <property type="match status" value="2"/>
</dbReference>
<dbReference type="PROSITE" id="PS00010">
    <property type="entry name" value="ASX_HYDROXYL"/>
    <property type="match status" value="6"/>
</dbReference>
<dbReference type="PROSITE" id="PS00022">
    <property type="entry name" value="EGF_1"/>
    <property type="match status" value="24"/>
</dbReference>
<dbReference type="PROSITE" id="PS01186">
    <property type="entry name" value="EGF_2"/>
    <property type="match status" value="16"/>
</dbReference>
<dbReference type="PROSITE" id="PS50026">
    <property type="entry name" value="EGF_3"/>
    <property type="match status" value="28"/>
</dbReference>
<dbReference type="PROSITE" id="PS01187">
    <property type="entry name" value="EGF_CA"/>
    <property type="match status" value="5"/>
</dbReference>
<dbReference type="PROSITE" id="PS50025">
    <property type="entry name" value="LAM_G_DOMAIN"/>
    <property type="match status" value="5"/>
</dbReference>
<sequence>MTDKSIIILSLMVFHSSFINGKTCRRELVEEWHPQPSSHVVNWTLTENICLDYYRDCWFLGVNTKIDTSGNQVVPQICPLQIQLGDILVISSEPSLQFPEINLMNVSETSFIGCVQNTTTEDQLLFGCRLKGMHTVNSKWLSVGTHYFITVMASGPSPCPLGLRLNVTVKQQFCQESLSSEFCSGHGKCLSEAWSKTYSCHCQPPFSGKYCQELDACSFKPCKNDGSCINKRGNWDEQGYECVCHPPFTGKNCSEIIVQCQPHVCFHGNCSNITSNSFICECDEQFSGPFCEVSTKPCVSLLCWKRGICPNSSSAYTYECPKGPSSQNGETDVSECSLILCENGTDGIKISNDVMCICSPIFTDLLCKSFQTSCESFPLKNNATFKKCEKDYHCSCMSGFTGKNCEKVIDHCKLLSINCLNEEWCFNIIGRFKYVCIPGCTKNPFWFLKNVHLIHLHPCYYGITFHGICQDKGPAHFEYVWQLGFTGSEGEKCQGVIDAYFFLTANCTEDAIYVNNPEDNNSSCSFPCEGTKEICANGCSCLSEEDNQEYRYLCFLRWTSNMYLENITDDQENKSQHEAICEDEINRPRCSCSLSYIGRLCVVNVDYCLGNQSISVHGLCLALSHNCNCSDLQKYEGNICEIDIEDCKSVSCKNGTTSIHLRGYFFYKCVPGFKGTRCEIDLDECALHPCKSGATCIDQPGNYFCQCGPPFKVVDGFSCLCNPGYVGTRCEQNIDNCILNAFEHNSTYKDLHLSYQCVCLSGWEGNFCEQESNECKMNPCKNNSTCTDLYKSYRCECTSGWTGQNCSEEINECDSDPCMNGGLCHESTIPGQFVCLCPPLYTGQFCHQRYNPCDLLNNPCRNNSTCLALVDGNQHCICREEFEGKHCEIDVKECLFLSCQDYGDCEDMVNNFRCICRPGFSGSLCEIEINECSSEPCKNNGTCVDLTNRFFCNCEPGYHGPFCELEVNKCKISPCLDEENCVYRTDRYNCLCAPGYTGINCEINLDECLSEPCLHDGVCIDGINHYTCDCKSGFFGTHCETNANDCLSNPCLHGRCTEPINEYPCSCDADGTSIQCKIKINDCTSMPCMNEGFCQKSAHGFTCICPRGYTGAYCEKSIDNCAEPELNSVICLNGGICVDGPGHTFDCRCLPGFSGQFCEININECSSSPCLHGANCEDHINGYVCKCQPGWSGHHCEKELECVPNSCVHQLCMENEPGSTCLCTPGFMTCSIGLLCGDEIRRITCLTPSFQRTDPISTQTHTVPPSETLVSSFPSIKATRIPTIMDTYPVDQGPKQTGIVKHDILPTTGLATLRISTPLKSYLLEELIVTRELSAKHSLLSSTDVSSSPFLNFGIHDPAQIVQDKTSVSHMRIRTSAATLGFFFPDRRARTSFIRSSLMSDFIFPTQSLLFENYQTVASSATPTTSVIRSIPGADIELNRHSLLSRGFLLTAASISATPVVSRGAQEDIKEYSAVSLISRREHWRSLISSMSPIFPAKKIISKQVTILNSSALHRFGTKAFIPSEYQAITEASSNQRLTNIKSQAADSLRELSQTCATCSMTEIKSSHEFSDQVLHSKQSHFYETFWMNSAILASWYALMGAQTITSGHSFSSATEITPSVAFTEVPSLFPSKKSAKRTILSSSLEESITLSSNLDVNLCLHKTCLSIVPSQTISSDLMNSDLTSELTTDELSVSENILKLLKIRQYGITTGPTEVLNQDSLLDMEKSKGSHTPFKLHPSDSSLDLELNLRSYPDVTLKTYSEITLANDLKNNLPPLTGSVPDFSEVTTNVAFYTVSATPALPIQTSSSMSVITPDWPYFIDYMTSLNKEVKTYSEWSKWELQPSVQYQEFPTASWHLPFTRSLTLSSLESIVAPQQLMISDFSCVCYYGDSYLEFQNVVLNPQNNISLEFQTFSSYGLLLYVKQDSNLVDGFFIQLSIENGTLKYHFYCPGEAKFKSINTAIRVDDGQKYTLLIRQELDPCKAELTILGRNTQTCESINHVLGKPLPKSGSVFIGGFPDLRGKIQMPVPVKNFTGCIEVIEINNWRSFIPSKAVRNYHINNCRSQGLMLSPTASFVDASDVTQGVDAMWTSVSPSVAAPSVCQEDVCHNGGTCRPIFLSSGIVSFQCDCPLHFTGRFCEKDAGLFFPSFSGNSYLELPFLNFVLEKEHNRTVTIYLTIKTNSLNGTILYSNGNNFGKQFLHLFLVEGKPSVKYGCGNSQNILTVSANYSINTNAFTPITVRHTMPIGSPGVVCMIEMTADGKPPVQKKDTEISHASQVYFESMFLGHIPENVQIHKKAGSVYGFRGCILDLQINNKEFFIIDEARRGKNIENCHVPWCAHHLCRNNGTCLSDSENLFCECPRLYSGKLCQFASCENNPCGNGATCVPKSGTDIICLCPYGRSGPLCTDAINITQPRFSGTDAFGYTSFLAYSRISDISFHYEFHLKFQLANNHSALQNNLIFFTGQKGHGLNGDDFLAVGLLNGSVVYSYNLGSGIASIRSDPLNLSLGVHTVHLGKFFQEGWLKVDDHKNKSIIAPGRLVGLNVFSQFYVGGYSEYTPDLLPNGADFKNGFQGCIFTLQVRTEKDGHFRGLGNPEGHPNAGRSVGQCHASPCSLMKCGNGGTCIESGTSVYCNCTTRWKGAFCTETVSICDPEHDPPHHCSRGATCISLPHGYTCFCPLGTTGIYCEQALILTVILEKPKPAEWKVKKEALSISDPSFRSSELSWMSFASFHVRKKTHIQLQFQPLAADGILFYAAQHLKAQSGDFLCISLVNGSVQLRYNLGDRTIILETLQKVTINGSTWHIIKAGRVGAEGYLDLDGINVTEKASTKMSSLDTNTDFYIGGVSSLNLVNPMAIENEPVGFHGCIRQVIINYQELQLTEFGAKGGSNVGDCDGTACGYNTCRNGGECRVNGTTFSCRCLPDWAGNICNQSAYCLNNLCLHQSLCIPDQSFSYSCLCTLGWVGRYCENKTSFTTAKFMGNSYIKYIDPNYRMRNLQFTTISLNFSTTKTEGLIIWMGIAQNEENDFLAIGLHNQTLKIAVNLGERISVPMSYNNGTFCCNKWHHVIVIQNQTLIKAYVNNSLILSEDIDPHKNFVALNYEGICYLGGFEYGRKVNIVTQEIFKTNFVGKIKDVVFFQDPKKIELIKLEGYNVYDGDEQNEVT</sequence>
<protein>
    <recommendedName>
        <fullName evidence="8">Protein eyes shut homolog</fullName>
    </recommendedName>
    <alternativeName>
        <fullName evidence="2">Epidermal growth factor-like protein 10</fullName>
        <shortName evidence="2">EGF-like protein 10</shortName>
    </alternativeName>
    <alternativeName>
        <fullName evidence="2">Epidermal growth factor-like protein 11</fullName>
        <shortName evidence="2">EGF-like protein 11</shortName>
    </alternativeName>
    <alternativeName>
        <fullName evidence="2">Protein spacemaker homolog</fullName>
    </alternativeName>
</protein>
<evidence type="ECO:0000250" key="1">
    <source>
        <dbReference type="UniProtKB" id="B8JI71"/>
    </source>
</evidence>
<evidence type="ECO:0000250" key="2">
    <source>
        <dbReference type="UniProtKB" id="Q5T1H1"/>
    </source>
</evidence>
<evidence type="ECO:0000255" key="3"/>
<evidence type="ECO:0000255" key="4">
    <source>
        <dbReference type="PROSITE-ProRule" id="PRU00076"/>
    </source>
</evidence>
<evidence type="ECO:0000255" key="5">
    <source>
        <dbReference type="PROSITE-ProRule" id="PRU00122"/>
    </source>
</evidence>
<evidence type="ECO:0000269" key="6">
    <source>
    </source>
</evidence>
<evidence type="ECO:0000269" key="7">
    <source>
    </source>
</evidence>
<evidence type="ECO:0000303" key="8">
    <source>
    </source>
</evidence>
<evidence type="ECO:0000305" key="9"/>
<comment type="function">
    <text evidence="1 2">Required to maintain the integrity of photoreceptor cells (By similarity). Specifically required for normal morphology of the photoreceptor ciliary pocket, and might thus facilitate protein trafficking between the photoreceptor inner and outer segments via the transition zone (By similarity).</text>
</comment>
<comment type="subcellular location">
    <subcellularLocation>
        <location evidence="6 7">Cell projection</location>
        <location evidence="6 7">Cilium</location>
        <location evidence="6 7">Photoreceptor outer segment</location>
    </subcellularLocation>
    <subcellularLocation>
        <location evidence="6 7">Cell projection</location>
        <location evidence="6 7">Cilium</location>
    </subcellularLocation>
    <subcellularLocation>
        <location evidence="7">Cytoplasm</location>
        <location evidence="7">Cytoskeleton</location>
        <location evidence="7">Cilium axoneme</location>
    </subcellularLocation>
    <subcellularLocation>
        <location evidence="2">Cytoplasm</location>
        <location evidence="2">Cytoskeleton</location>
        <location evidence="2">Microtubule organizing center</location>
        <location evidence="2">Centrosome</location>
    </subcellularLocation>
    <subcellularLocation>
        <location evidence="6">Secreted</location>
        <location evidence="6">Extracellular space</location>
        <location evidence="6">Extracellular matrix</location>
        <location evidence="6">Interphotoreceptor matrix</location>
    </subcellularLocation>
    <text evidence="6 7">Localizes to discrete puncta at, or adjacent to, the photoreceptor connecting cilium (PubMed:27737822). Highly expressed in cone photoreceptor outer segments (PubMed:27737822, PubMed:27846257). Weakly expressed in rod photoreceptor outer segments (PubMed:27737822). May localize to the cilium axoneme (PubMed:27846257). May also be secreted into the interphotoreceptor extracellular matrix (PubMed:27737822).</text>
</comment>
<comment type="tissue specificity">
    <text evidence="6 7">Expressed in retina (at protein level).</text>
</comment>
<comment type="similarity">
    <text evidence="9">Belongs to the EYS family.</text>
</comment>
<feature type="signal peptide" evidence="3">
    <location>
        <begin position="1"/>
        <end position="21"/>
    </location>
</feature>
<feature type="chain" id="PRO_5014416866" description="Protein eyes shut homolog" evidence="3">
    <location>
        <begin position="22"/>
        <end position="3165"/>
    </location>
</feature>
<feature type="domain" description="EGF-like 1" evidence="4">
    <location>
        <begin position="170"/>
        <end position="212"/>
    </location>
</feature>
<feature type="domain" description="EGF-like 2" evidence="4">
    <location>
        <begin position="213"/>
        <end position="254"/>
    </location>
</feature>
<feature type="domain" description="EGF-like 3" evidence="4">
    <location>
        <begin position="256"/>
        <end position="292"/>
    </location>
</feature>
<feature type="domain" description="EGF-like 4" evidence="4">
    <location>
        <begin position="332"/>
        <end position="368"/>
    </location>
</feature>
<feature type="domain" description="EGF-like 5" evidence="4">
    <location>
        <begin position="370"/>
        <end position="406"/>
    </location>
</feature>
<feature type="domain" description="EGF-like 6" evidence="4">
    <location>
        <begin position="566"/>
        <end position="602"/>
    </location>
</feature>
<feature type="domain" description="EGF-like 7" evidence="4">
    <location>
        <begin position="604"/>
        <end position="641"/>
    </location>
</feature>
<feature type="domain" description="EGF-like 8" evidence="4">
    <location>
        <begin position="643"/>
        <end position="679"/>
    </location>
</feature>
<feature type="domain" description="EGF-like 9; calcium-binding" evidence="4">
    <location>
        <begin position="681"/>
        <end position="720"/>
    </location>
</feature>
<feature type="domain" description="EGF-like 10" evidence="4">
    <location>
        <begin position="733"/>
        <end position="769"/>
    </location>
</feature>
<feature type="domain" description="EGF-like 11; calcium-binding" evidence="4">
    <location>
        <begin position="771"/>
        <end position="807"/>
    </location>
</feature>
<feature type="domain" description="EGF-like 12" evidence="4">
    <location>
        <begin position="809"/>
        <end position="847"/>
    </location>
</feature>
<feature type="domain" description="EGF-like 13" evidence="4">
    <location>
        <begin position="849"/>
        <end position="888"/>
    </location>
</feature>
<feature type="domain" description="EGF-like 14" evidence="4">
    <location>
        <begin position="890"/>
        <end position="926"/>
    </location>
</feature>
<feature type="domain" description="EGF-like 15; calcium-binding" evidence="4">
    <location>
        <begin position="928"/>
        <end position="964"/>
    </location>
</feature>
<feature type="domain" description="EGF-like 16" evidence="4">
    <location>
        <begin position="966"/>
        <end position="1002"/>
    </location>
</feature>
<feature type="domain" description="EGF-like 17; calcium-binding" evidence="4">
    <location>
        <begin position="1004"/>
        <end position="1040"/>
    </location>
</feature>
<feature type="domain" description="EGF-like 18" evidence="4">
    <location>
        <begin position="1042"/>
        <end position="1077"/>
    </location>
</feature>
<feature type="domain" description="EGF-like 19" evidence="4">
    <location>
        <begin position="1079"/>
        <end position="1115"/>
    </location>
</feature>
<feature type="domain" description="EGF-like 20" evidence="4">
    <location>
        <begin position="1117"/>
        <end position="1159"/>
    </location>
</feature>
<feature type="domain" description="EGF-like 21; calcium-binding" evidence="4">
    <location>
        <begin position="1161"/>
        <end position="1197"/>
    </location>
</feature>
<feature type="domain" description="Laminin G-like 1" evidence="5">
    <location>
        <begin position="1883"/>
        <end position="2063"/>
    </location>
</feature>
<feature type="domain" description="EGF-like 22" evidence="4">
    <location>
        <begin position="2099"/>
        <end position="2140"/>
    </location>
</feature>
<feature type="domain" description="Laminin G-like 2" evidence="5">
    <location>
        <begin position="2145"/>
        <end position="2339"/>
    </location>
</feature>
<feature type="domain" description="EGF-like 23" evidence="4">
    <location>
        <begin position="2335"/>
        <end position="2368"/>
    </location>
</feature>
<feature type="domain" description="EGF-like 24" evidence="4">
    <location>
        <begin position="2371"/>
        <end position="2408"/>
    </location>
</feature>
<feature type="domain" description="Laminin G-like 3" evidence="5">
    <location>
        <begin position="2419"/>
        <end position="2609"/>
    </location>
</feature>
<feature type="domain" description="EGF-like 25" evidence="4">
    <location>
        <begin position="2610"/>
        <end position="2646"/>
    </location>
</feature>
<feature type="domain" description="EGF-like 26" evidence="4">
    <location>
        <begin position="2648"/>
        <end position="2689"/>
    </location>
</feature>
<feature type="domain" description="Laminin G-like 4" evidence="5">
    <location>
        <begin position="2717"/>
        <end position="2895"/>
    </location>
</feature>
<feature type="domain" description="EGF-like 27" evidence="4">
    <location>
        <begin position="2896"/>
        <end position="2932"/>
    </location>
</feature>
<feature type="domain" description="EGF-like 28" evidence="4">
    <location>
        <begin position="2933"/>
        <end position="2970"/>
    </location>
</feature>
<feature type="domain" description="Laminin G-like 5" evidence="5">
    <location>
        <begin position="2975"/>
        <end position="3165"/>
    </location>
</feature>
<feature type="glycosylation site" description="N-linked (GlcNAc...) asparagine" evidence="3">
    <location>
        <position position="42"/>
    </location>
</feature>
<feature type="glycosylation site" description="N-linked (GlcNAc...) asparagine" evidence="3">
    <location>
        <position position="105"/>
    </location>
</feature>
<feature type="glycosylation site" description="N-linked (GlcNAc...) asparagine" evidence="3">
    <location>
        <position position="117"/>
    </location>
</feature>
<feature type="glycosylation site" description="N-linked (GlcNAc...) asparagine" evidence="3">
    <location>
        <position position="166"/>
    </location>
</feature>
<feature type="glycosylation site" description="N-linked (GlcNAc...) asparagine" evidence="3">
    <location>
        <position position="252"/>
    </location>
</feature>
<feature type="glycosylation site" description="N-linked (GlcNAc...) asparagine" evidence="3">
    <location>
        <position position="269"/>
    </location>
</feature>
<feature type="glycosylation site" description="N-linked (GlcNAc...) asparagine" evidence="3">
    <location>
        <position position="272"/>
    </location>
</feature>
<feature type="glycosylation site" description="N-linked (GlcNAc...) asparagine" evidence="3">
    <location>
        <position position="311"/>
    </location>
</feature>
<feature type="glycosylation site" description="N-linked (GlcNAc...) asparagine" evidence="3">
    <location>
        <position position="343"/>
    </location>
</feature>
<feature type="glycosylation site" description="N-linked (GlcNAc...) asparagine" evidence="3">
    <location>
        <position position="382"/>
    </location>
</feature>
<feature type="glycosylation site" description="N-linked (GlcNAc...) asparagine" evidence="3">
    <location>
        <position position="506"/>
    </location>
</feature>
<feature type="glycosylation site" description="N-linked (GlcNAc...) asparagine" evidence="3">
    <location>
        <position position="520"/>
    </location>
</feature>
<feature type="glycosylation site" description="N-linked (GlcNAc...) asparagine" evidence="3">
    <location>
        <position position="521"/>
    </location>
</feature>
<feature type="glycosylation site" description="N-linked (GlcNAc...) asparagine" evidence="3">
    <location>
        <position position="566"/>
    </location>
</feature>
<feature type="glycosylation site" description="N-linked (GlcNAc...) asparagine" evidence="3">
    <location>
        <position position="573"/>
    </location>
</feature>
<feature type="glycosylation site" description="N-linked (GlcNAc...) asparagine" evidence="3">
    <location>
        <position position="611"/>
    </location>
</feature>
<feature type="glycosylation site" description="N-linked (GlcNAc...) asparagine" evidence="3">
    <location>
        <position position="628"/>
    </location>
</feature>
<feature type="glycosylation site" description="N-linked (GlcNAc...) asparagine" evidence="3">
    <location>
        <position position="654"/>
    </location>
</feature>
<feature type="glycosylation site" description="N-linked (GlcNAc...) asparagine" evidence="3">
    <location>
        <position position="745"/>
    </location>
</feature>
<feature type="glycosylation site" description="N-linked (GlcNAc...) asparagine" evidence="3">
    <location>
        <position position="782"/>
    </location>
</feature>
<feature type="glycosylation site" description="N-linked (GlcNAc...) asparagine" evidence="3">
    <location>
        <position position="783"/>
    </location>
</feature>
<feature type="glycosylation site" description="N-linked (GlcNAc...) asparagine" evidence="3">
    <location>
        <position position="805"/>
    </location>
</feature>
<feature type="glycosylation site" description="N-linked (GlcNAc...) asparagine" evidence="3">
    <location>
        <position position="862"/>
    </location>
</feature>
<feature type="glycosylation site" description="N-linked (GlcNAc...) asparagine" evidence="3">
    <location>
        <position position="863"/>
    </location>
</feature>
<feature type="glycosylation site" description="N-linked (GlcNAc...) asparagine" evidence="3">
    <location>
        <position position="940"/>
    </location>
</feature>
<feature type="glycosylation site" description="N-linked (GlcNAc...) asparagine" evidence="3">
    <location>
        <position position="1509"/>
    </location>
</feature>
<feature type="glycosylation site" description="N-linked (GlcNAc...) asparagine" evidence="3">
    <location>
        <position position="1906"/>
    </location>
</feature>
<feature type="glycosylation site" description="N-linked (GlcNAc...) asparagine" evidence="3">
    <location>
        <position position="1941"/>
    </location>
</feature>
<feature type="glycosylation site" description="N-linked (GlcNAc...) asparagine" evidence="3">
    <location>
        <position position="2033"/>
    </location>
</feature>
<feature type="glycosylation site" description="N-linked (GlcNAc...) asparagine" evidence="3">
    <location>
        <position position="2170"/>
    </location>
</feature>
<feature type="glycosylation site" description="N-linked (GlcNAc...) asparagine" evidence="3">
    <location>
        <position position="2185"/>
    </location>
</feature>
<feature type="glycosylation site" description="N-linked (GlcNAc...) asparagine" evidence="3">
    <location>
        <position position="2228"/>
    </location>
</feature>
<feature type="glycosylation site" description="N-linked (GlcNAc...) asparagine" evidence="3">
    <location>
        <position position="2347"/>
    </location>
</feature>
<feature type="glycosylation site" description="N-linked (GlcNAc...) asparagine" evidence="3">
    <location>
        <position position="2412"/>
    </location>
</feature>
<feature type="glycosylation site" description="N-linked (GlcNAc...) asparagine" evidence="3">
    <location>
        <position position="2453"/>
    </location>
</feature>
<feature type="glycosylation site" description="N-linked (GlcNAc...) asparagine" evidence="3">
    <location>
        <position position="2484"/>
    </location>
</feature>
<feature type="glycosylation site" description="N-linked (GlcNAc...) asparagine" evidence="3">
    <location>
        <position position="2506"/>
    </location>
</feature>
<feature type="glycosylation site" description="N-linked (GlcNAc...) asparagine" evidence="3">
    <location>
        <position position="2532"/>
    </location>
</feature>
<feature type="glycosylation site" description="N-linked (GlcNAc...) asparagine" evidence="3">
    <location>
        <position position="2635"/>
    </location>
</feature>
<feature type="glycosylation site" description="N-linked (GlcNAc...) asparagine" evidence="3">
    <location>
        <position position="2775"/>
    </location>
</feature>
<feature type="glycosylation site" description="N-linked (GlcNAc...) asparagine" evidence="3">
    <location>
        <position position="2800"/>
    </location>
</feature>
<feature type="glycosylation site" description="N-linked (GlcNAc...) asparagine" evidence="3">
    <location>
        <position position="2824"/>
    </location>
</feature>
<feature type="glycosylation site" description="N-linked (GlcNAc...) asparagine" evidence="3">
    <location>
        <position position="2914"/>
    </location>
</feature>
<feature type="glycosylation site" description="N-linked (GlcNAc...) asparagine" evidence="3">
    <location>
        <position position="2932"/>
    </location>
</feature>
<feature type="glycosylation site" description="N-linked (GlcNAc...) asparagine" evidence="3">
    <location>
        <position position="2971"/>
    </location>
</feature>
<feature type="glycosylation site" description="N-linked (GlcNAc...) asparagine" evidence="3">
    <location>
        <position position="3006"/>
    </location>
</feature>
<feature type="glycosylation site" description="N-linked (GlcNAc...) asparagine" evidence="3">
    <location>
        <position position="3036"/>
    </location>
</feature>
<feature type="glycosylation site" description="N-linked (GlcNAc...) asparagine" evidence="3">
    <location>
        <position position="3057"/>
    </location>
</feature>
<feature type="glycosylation site" description="N-linked (GlcNAc...) asparagine" evidence="3">
    <location>
        <position position="3073"/>
    </location>
</feature>
<feature type="glycosylation site" description="N-linked (GlcNAc...) asparagine" evidence="3">
    <location>
        <position position="3082"/>
    </location>
</feature>
<feature type="disulfide bond" evidence="4">
    <location>
        <begin position="174"/>
        <end position="189"/>
    </location>
</feature>
<feature type="disulfide bond" evidence="4">
    <location>
        <begin position="183"/>
        <end position="200"/>
    </location>
</feature>
<feature type="disulfide bond" evidence="4">
    <location>
        <begin position="202"/>
        <end position="211"/>
    </location>
</feature>
<feature type="disulfide bond" evidence="4">
    <location>
        <begin position="217"/>
        <end position="228"/>
    </location>
</feature>
<feature type="disulfide bond" evidence="4">
    <location>
        <begin position="222"/>
        <end position="242"/>
    </location>
</feature>
<feature type="disulfide bond" evidence="4">
    <location>
        <begin position="244"/>
        <end position="253"/>
    </location>
</feature>
<feature type="disulfide bond" evidence="4">
    <location>
        <begin position="260"/>
        <end position="270"/>
    </location>
</feature>
<feature type="disulfide bond" evidence="4">
    <location>
        <begin position="265"/>
        <end position="280"/>
    </location>
</feature>
<feature type="disulfide bond" evidence="4">
    <location>
        <begin position="282"/>
        <end position="291"/>
    </location>
</feature>
<feature type="disulfide bond" evidence="4">
    <location>
        <begin position="341"/>
        <end position="356"/>
    </location>
</feature>
<feature type="disulfide bond" evidence="4">
    <location>
        <begin position="358"/>
        <end position="367"/>
    </location>
</feature>
<feature type="disulfide bond" evidence="4">
    <location>
        <begin position="396"/>
        <end position="405"/>
    </location>
</feature>
<feature type="disulfide bond" evidence="4">
    <location>
        <begin position="592"/>
        <end position="601"/>
    </location>
</feature>
<feature type="disulfide bond" evidence="4">
    <location>
        <begin position="608"/>
        <end position="620"/>
    </location>
</feature>
<feature type="disulfide bond" evidence="4">
    <location>
        <begin position="629"/>
        <end position="640"/>
    </location>
</feature>
<feature type="disulfide bond" evidence="4">
    <location>
        <begin position="669"/>
        <end position="678"/>
    </location>
</feature>
<feature type="disulfide bond" evidence="4">
    <location>
        <begin position="685"/>
        <end position="696"/>
    </location>
</feature>
<feature type="disulfide bond" evidence="4">
    <location>
        <begin position="690"/>
        <end position="705"/>
    </location>
</feature>
<feature type="disulfide bond" evidence="4">
    <location>
        <begin position="707"/>
        <end position="719"/>
    </location>
</feature>
<feature type="disulfide bond" evidence="4">
    <location>
        <begin position="759"/>
        <end position="768"/>
    </location>
</feature>
<feature type="disulfide bond" evidence="4">
    <location>
        <begin position="775"/>
        <end position="786"/>
    </location>
</feature>
<feature type="disulfide bond" evidence="4">
    <location>
        <begin position="780"/>
        <end position="795"/>
    </location>
</feature>
<feature type="disulfide bond" evidence="4">
    <location>
        <begin position="797"/>
        <end position="806"/>
    </location>
</feature>
<feature type="disulfide bond" evidence="4">
    <location>
        <begin position="813"/>
        <end position="824"/>
    </location>
</feature>
<feature type="disulfide bond" evidence="4">
    <location>
        <begin position="818"/>
        <end position="835"/>
    </location>
</feature>
<feature type="disulfide bond" evidence="4">
    <location>
        <begin position="837"/>
        <end position="846"/>
    </location>
</feature>
<feature type="disulfide bond" evidence="4">
    <location>
        <begin position="853"/>
        <end position="866"/>
    </location>
</feature>
<feature type="disulfide bond" evidence="4">
    <location>
        <begin position="860"/>
        <end position="876"/>
    </location>
</feature>
<feature type="disulfide bond" evidence="4">
    <location>
        <begin position="878"/>
        <end position="887"/>
    </location>
</feature>
<feature type="disulfide bond" evidence="4">
    <location>
        <begin position="894"/>
        <end position="905"/>
    </location>
</feature>
<feature type="disulfide bond" evidence="4">
    <location>
        <begin position="899"/>
        <end position="914"/>
    </location>
</feature>
<feature type="disulfide bond" evidence="4">
    <location>
        <begin position="916"/>
        <end position="925"/>
    </location>
</feature>
<feature type="disulfide bond" evidence="4">
    <location>
        <begin position="932"/>
        <end position="943"/>
    </location>
</feature>
<feature type="disulfide bond" evidence="4">
    <location>
        <begin position="937"/>
        <end position="952"/>
    </location>
</feature>
<feature type="disulfide bond" evidence="4">
    <location>
        <begin position="954"/>
        <end position="963"/>
    </location>
</feature>
<feature type="disulfide bond" evidence="4">
    <location>
        <begin position="970"/>
        <end position="981"/>
    </location>
</feature>
<feature type="disulfide bond" evidence="4">
    <location>
        <begin position="975"/>
        <end position="990"/>
    </location>
</feature>
<feature type="disulfide bond" evidence="4">
    <location>
        <begin position="992"/>
        <end position="1001"/>
    </location>
</feature>
<feature type="disulfide bond" evidence="4">
    <location>
        <begin position="1008"/>
        <end position="1019"/>
    </location>
</feature>
<feature type="disulfide bond" evidence="4">
    <location>
        <begin position="1013"/>
        <end position="1028"/>
    </location>
</feature>
<feature type="disulfide bond" evidence="4">
    <location>
        <begin position="1030"/>
        <end position="1039"/>
    </location>
</feature>
<feature type="disulfide bond" evidence="4">
    <location>
        <begin position="1046"/>
        <end position="1056"/>
    </location>
</feature>
<feature type="disulfide bond" evidence="4">
    <location>
        <begin position="1051"/>
        <end position="1065"/>
    </location>
</feature>
<feature type="disulfide bond" evidence="4">
    <location>
        <begin position="1067"/>
        <end position="1076"/>
    </location>
</feature>
<feature type="disulfide bond" evidence="4">
    <location>
        <begin position="1083"/>
        <end position="1094"/>
    </location>
</feature>
<feature type="disulfide bond" evidence="4">
    <location>
        <begin position="1088"/>
        <end position="1103"/>
    </location>
</feature>
<feature type="disulfide bond" evidence="4">
    <location>
        <begin position="1105"/>
        <end position="1114"/>
    </location>
</feature>
<feature type="disulfide bond" evidence="4">
    <location>
        <begin position="1121"/>
        <end position="1137"/>
    </location>
</feature>
<feature type="disulfide bond" evidence="4">
    <location>
        <begin position="1131"/>
        <end position="1147"/>
    </location>
</feature>
<feature type="disulfide bond" evidence="4">
    <location>
        <begin position="1149"/>
        <end position="1158"/>
    </location>
</feature>
<feature type="disulfide bond" evidence="4">
    <location>
        <begin position="1165"/>
        <end position="1176"/>
    </location>
</feature>
<feature type="disulfide bond" evidence="4">
    <location>
        <begin position="1170"/>
        <end position="1185"/>
    </location>
</feature>
<feature type="disulfide bond" evidence="4">
    <location>
        <begin position="1187"/>
        <end position="1196"/>
    </location>
</feature>
<feature type="disulfide bond" evidence="5">
    <location>
        <begin position="2037"/>
        <end position="2063"/>
    </location>
</feature>
<feature type="disulfide bond" evidence="4">
    <location>
        <begin position="2103"/>
        <end position="2114"/>
    </location>
</feature>
<feature type="disulfide bond" evidence="4">
    <location>
        <begin position="2108"/>
        <end position="2128"/>
    </location>
</feature>
<feature type="disulfide bond" evidence="4">
    <location>
        <begin position="2130"/>
        <end position="2139"/>
    </location>
</feature>
<feature type="disulfide bond" evidence="5">
    <location>
        <begin position="2308"/>
        <end position="2339"/>
    </location>
</feature>
<feature type="disulfide bond" evidence="4">
    <location>
        <begin position="2339"/>
        <end position="2350"/>
    </location>
</feature>
<feature type="disulfide bond" evidence="4">
    <location>
        <begin position="2344"/>
        <end position="2359"/>
    </location>
</feature>
<feature type="disulfide bond" evidence="4">
    <location>
        <begin position="2375"/>
        <end position="2386"/>
    </location>
</feature>
<feature type="disulfide bond" evidence="4">
    <location>
        <begin position="2380"/>
        <end position="2396"/>
    </location>
</feature>
<feature type="disulfide bond" evidence="4">
    <location>
        <begin position="2398"/>
        <end position="2407"/>
    </location>
</feature>
<feature type="disulfide bond" evidence="5">
    <location>
        <begin position="2576"/>
        <end position="2609"/>
    </location>
</feature>
<feature type="disulfide bond" evidence="4">
    <location>
        <begin position="2614"/>
        <end position="2625"/>
    </location>
</feature>
<feature type="disulfide bond" evidence="4">
    <location>
        <begin position="2619"/>
        <end position="2634"/>
    </location>
</feature>
<feature type="disulfide bond" evidence="4">
    <location>
        <begin position="2636"/>
        <end position="2645"/>
    </location>
</feature>
<feature type="disulfide bond" evidence="4">
    <location>
        <begin position="2652"/>
        <end position="2668"/>
    </location>
</feature>
<feature type="disulfide bond" evidence="4">
    <location>
        <begin position="2662"/>
        <end position="2677"/>
    </location>
</feature>
<feature type="disulfide bond" evidence="4">
    <location>
        <begin position="2679"/>
        <end position="2688"/>
    </location>
</feature>
<feature type="disulfide bond" evidence="5">
    <location>
        <begin position="2868"/>
        <end position="2895"/>
    </location>
</feature>
<feature type="disulfide bond" evidence="4">
    <location>
        <begin position="2900"/>
        <end position="2911"/>
    </location>
</feature>
<feature type="disulfide bond" evidence="4">
    <location>
        <begin position="2905"/>
        <end position="2920"/>
    </location>
</feature>
<feature type="disulfide bond" evidence="4">
    <location>
        <begin position="2922"/>
        <end position="2931"/>
    </location>
</feature>
<feature type="disulfide bond" evidence="4">
    <location>
        <begin position="2937"/>
        <end position="2948"/>
    </location>
</feature>
<feature type="disulfide bond" evidence="4">
    <location>
        <begin position="2942"/>
        <end position="2958"/>
    </location>
</feature>
<feature type="disulfide bond" evidence="4">
    <location>
        <begin position="2960"/>
        <end position="2969"/>
    </location>
</feature>
<name>EYS_MACFA</name>
<proteinExistence type="evidence at protein level"/>
<organism>
    <name type="scientific">Macaca fascicularis</name>
    <name type="common">Crab-eating macaque</name>
    <name type="synonym">Cynomolgus monkey</name>
    <dbReference type="NCBI Taxonomy" id="9541"/>
    <lineage>
        <taxon>Eukaryota</taxon>
        <taxon>Metazoa</taxon>
        <taxon>Chordata</taxon>
        <taxon>Craniata</taxon>
        <taxon>Vertebrata</taxon>
        <taxon>Euteleostomi</taxon>
        <taxon>Mammalia</taxon>
        <taxon>Eutheria</taxon>
        <taxon>Euarchontoglires</taxon>
        <taxon>Primates</taxon>
        <taxon>Haplorrhini</taxon>
        <taxon>Catarrhini</taxon>
        <taxon>Cercopithecidae</taxon>
        <taxon>Cercopithecinae</taxon>
        <taxon>Macaca</taxon>
    </lineage>
</organism>
<reference key="1">
    <citation type="submission" date="2013-03" db="EMBL/GenBank/DDBJ databases">
        <authorList>
            <person name="Huang N.-L."/>
            <person name="Huang M.-D."/>
            <person name="Chen T.-L.L."/>
            <person name="Huang A.H."/>
        </authorList>
    </citation>
    <scope>NUCLEOTIDE SEQUENCE [LARGE SCALE GENOMIC DNA]</scope>
</reference>
<reference evidence="9" key="2">
    <citation type="journal article" date="2016" name="Biol. Open">
        <title>Eyes shut homolog is required for maintaining the ciliary pocket and survival of photoreceptors in zebrafish.</title>
        <authorList>
            <person name="Yu M."/>
            <person name="Liu Y."/>
            <person name="Li J."/>
            <person name="Natale B.N."/>
            <person name="Cao S."/>
            <person name="Wang D."/>
            <person name="Amack J.D."/>
            <person name="Hu H."/>
        </authorList>
    </citation>
    <scope>SUBCELLULAR LOCATION</scope>
    <scope>TISSUE SPECIFICITY</scope>
</reference>
<reference evidence="9" key="3">
    <citation type="journal article" date="2016" name="PLoS ONE">
        <title>EYS is a protein associated with the ciliary axoneme in rods and cones.</title>
        <authorList>
            <person name="Alfano G."/>
            <person name="Kruczek P.M."/>
            <person name="Shah A.Z."/>
            <person name="Kramarz B."/>
            <person name="Jeffery G."/>
            <person name="Zelhof A.C."/>
            <person name="Bhattacharya S.S."/>
        </authorList>
    </citation>
    <scope>SUBCELLULAR LOCATION</scope>
    <scope>TISSUE SPECIFICITY</scope>
</reference>
<keyword id="KW-0106">Calcium</keyword>
<keyword id="KW-0966">Cell projection</keyword>
<keyword id="KW-0963">Cytoplasm</keyword>
<keyword id="KW-0206">Cytoskeleton</keyword>
<keyword id="KW-1015">Disulfide bond</keyword>
<keyword id="KW-0245">EGF-like domain</keyword>
<keyword id="KW-0272">Extracellular matrix</keyword>
<keyword id="KW-0325">Glycoprotein</keyword>
<keyword id="KW-1185">Reference proteome</keyword>
<keyword id="KW-0677">Repeat</keyword>
<keyword id="KW-0964">Secreted</keyword>
<keyword id="KW-0716">Sensory transduction</keyword>
<keyword id="KW-0732">Signal</keyword>
<keyword id="KW-0844">Vision</keyword>
<accession>A0A2K5V015</accession>
<gene>
    <name evidence="8" type="primary">EYS</name>
</gene>